<dbReference type="EMBL" id="AY050634">
    <property type="protein sequence ID" value="AAL08049.1"/>
    <property type="molecule type" value="mRNA"/>
</dbReference>
<dbReference type="EMBL" id="AY050635">
    <property type="protein sequence ID" value="AAL08050.1"/>
    <property type="molecule type" value="mRNA"/>
</dbReference>
<dbReference type="EMBL" id="AY050636">
    <property type="protein sequence ID" value="AAL08051.1"/>
    <property type="molecule type" value="mRNA"/>
</dbReference>
<dbReference type="EMBL" id="AY050637">
    <property type="protein sequence ID" value="AAL08052.1"/>
    <property type="molecule type" value="mRNA"/>
</dbReference>
<dbReference type="EMBL" id="AY050638">
    <property type="protein sequence ID" value="AAL08053.1"/>
    <property type="molecule type" value="mRNA"/>
</dbReference>
<dbReference type="EMBL" id="AY325129">
    <property type="protein sequence ID" value="AAQ62560.1"/>
    <property type="molecule type" value="mRNA"/>
</dbReference>
<dbReference type="EMBL" id="AB075825">
    <property type="protein sequence ID" value="BAB85531.1"/>
    <property type="molecule type" value="mRNA"/>
</dbReference>
<dbReference type="EMBL" id="AK057051">
    <property type="protein sequence ID" value="BAB71356.1"/>
    <property type="molecule type" value="mRNA"/>
</dbReference>
<dbReference type="EMBL" id="AK095127">
    <property type="protein sequence ID" value="BAC04489.1"/>
    <property type="molecule type" value="mRNA"/>
</dbReference>
<dbReference type="EMBL" id="AK315677">
    <property type="protein sequence ID" value="BAG38042.1"/>
    <property type="molecule type" value="mRNA"/>
</dbReference>
<dbReference type="EMBL" id="AL020995">
    <property type="status" value="NOT_ANNOTATED_CDS"/>
    <property type="molecule type" value="Genomic_DNA"/>
</dbReference>
<dbReference type="EMBL" id="CH471059">
    <property type="protein sequence ID" value="EAX07472.1"/>
    <property type="molecule type" value="Genomic_DNA"/>
</dbReference>
<dbReference type="EMBL" id="CH471059">
    <property type="protein sequence ID" value="EAX07481.1"/>
    <property type="molecule type" value="Genomic_DNA"/>
</dbReference>
<dbReference type="EMBL" id="BC010449">
    <property type="protein sequence ID" value="AAH10449.1"/>
    <property type="molecule type" value="mRNA"/>
</dbReference>
<dbReference type="EMBL" id="BC028128">
    <property type="protein sequence ID" value="AAH28128.1"/>
    <property type="molecule type" value="mRNA"/>
</dbReference>
<dbReference type="CCDS" id="CCDS375.1">
    <molecule id="Q96A70-1"/>
</dbReference>
<dbReference type="CCDS" id="CCDS76138.1">
    <molecule id="Q96A70-2"/>
</dbReference>
<dbReference type="RefSeq" id="NP_001280491.1">
    <molecule id="Q96A70-1"/>
    <property type="nucleotide sequence ID" value="NM_001293562.2"/>
</dbReference>
<dbReference type="RefSeq" id="NP_001288752.1">
    <property type="nucleotide sequence ID" value="NM_001301823.1"/>
</dbReference>
<dbReference type="RefSeq" id="NP_001288753.1">
    <property type="nucleotide sequence ID" value="NM_001301824.1"/>
</dbReference>
<dbReference type="RefSeq" id="NP_001288754.1">
    <molecule id="Q96A70-2"/>
    <property type="nucleotide sequence ID" value="NM_001301825.1"/>
</dbReference>
<dbReference type="RefSeq" id="NP_001288755.1">
    <molecule id="Q96A70-3"/>
    <property type="nucleotide sequence ID" value="NM_001301826.1"/>
</dbReference>
<dbReference type="RefSeq" id="NP_001363651.1">
    <molecule id="Q96A70-1"/>
    <property type="nucleotide sequence ID" value="NM_001376722.1"/>
</dbReference>
<dbReference type="RefSeq" id="NP_001363653.1">
    <molecule id="Q96A70-1"/>
    <property type="nucleotide sequence ID" value="NM_001376724.1"/>
</dbReference>
<dbReference type="RefSeq" id="NP_443724.1">
    <molecule id="Q96A70-1"/>
    <property type="nucleotide sequence ID" value="NM_052998.4"/>
</dbReference>
<dbReference type="RefSeq" id="XP_005270461.1">
    <property type="nucleotide sequence ID" value="XM_005270404.2"/>
</dbReference>
<dbReference type="RefSeq" id="XP_005270464.1">
    <property type="nucleotide sequence ID" value="XM_005270407.1"/>
</dbReference>
<dbReference type="RefSeq" id="XP_011538865.1">
    <molecule id="Q96A70-3"/>
    <property type="nucleotide sequence ID" value="XM_011540563.2"/>
</dbReference>
<dbReference type="RefSeq" id="XP_016855657.1">
    <property type="nucleotide sequence ID" value="XM_017000168.1"/>
</dbReference>
<dbReference type="RefSeq" id="XP_016855658.1">
    <property type="nucleotide sequence ID" value="XM_017000169.1"/>
</dbReference>
<dbReference type="RefSeq" id="XP_016855659.1">
    <property type="nucleotide sequence ID" value="XM_017000170.1"/>
</dbReference>
<dbReference type="RefSeq" id="XP_016855660.1">
    <property type="nucleotide sequence ID" value="XM_017000171.1"/>
</dbReference>
<dbReference type="RefSeq" id="XP_016855661.1">
    <property type="nucleotide sequence ID" value="XM_017000172.1"/>
</dbReference>
<dbReference type="RefSeq" id="XP_016855662.1">
    <property type="nucleotide sequence ID" value="XM_017000173.1"/>
</dbReference>
<dbReference type="RefSeq" id="XP_016855664.1">
    <property type="nucleotide sequence ID" value="XM_017000175.1"/>
</dbReference>
<dbReference type="RefSeq" id="XP_047299429.1">
    <molecule id="Q96A70-3"/>
    <property type="nucleotide sequence ID" value="XM_047443473.1"/>
</dbReference>
<dbReference type="RefSeq" id="XP_047299430.1">
    <molecule id="Q96A70-3"/>
    <property type="nucleotide sequence ID" value="XM_047443474.1"/>
</dbReference>
<dbReference type="RefSeq" id="XP_054190033.1">
    <molecule id="Q96A70-3"/>
    <property type="nucleotide sequence ID" value="XM_054334058.1"/>
</dbReference>
<dbReference type="RefSeq" id="XP_054190034.1">
    <molecule id="Q96A70-3"/>
    <property type="nucleotide sequence ID" value="XM_054334059.1"/>
</dbReference>
<dbReference type="RefSeq" id="XP_054190035.1">
    <molecule id="Q96A70-3"/>
    <property type="nucleotide sequence ID" value="XM_054334060.1"/>
</dbReference>
<dbReference type="SMR" id="Q96A70"/>
<dbReference type="BioGRID" id="125246">
    <property type="interactions" value="33"/>
</dbReference>
<dbReference type="CORUM" id="Q96A70"/>
<dbReference type="FunCoup" id="Q96A70">
    <property type="interactions" value="541"/>
</dbReference>
<dbReference type="IntAct" id="Q96A70">
    <property type="interactions" value="10"/>
</dbReference>
<dbReference type="STRING" id="9606.ENSP00000362540"/>
<dbReference type="DrugBank" id="DB00125">
    <property type="generic name" value="Arginine"/>
</dbReference>
<dbReference type="DrugBank" id="DB09096">
    <property type="generic name" value="Benzoyl peroxide"/>
</dbReference>
<dbReference type="DrugBank" id="DB00114">
    <property type="generic name" value="Pyridoxal phosphate"/>
</dbReference>
<dbReference type="GlyGen" id="Q96A70">
    <property type="glycosylation" value="2 sites"/>
</dbReference>
<dbReference type="iPTMnet" id="Q96A70"/>
<dbReference type="PhosphoSitePlus" id="Q96A70"/>
<dbReference type="BioMuta" id="AZIN2"/>
<dbReference type="DMDM" id="24636807"/>
<dbReference type="jPOST" id="Q96A70"/>
<dbReference type="MassIVE" id="Q96A70"/>
<dbReference type="PaxDb" id="9606-ENSP00000294517"/>
<dbReference type="PeptideAtlas" id="Q96A70"/>
<dbReference type="ProteomicsDB" id="75924">
    <molecule id="Q96A70-1"/>
</dbReference>
<dbReference type="ProteomicsDB" id="75925">
    <molecule id="Q96A70-2"/>
</dbReference>
<dbReference type="ProteomicsDB" id="75926">
    <molecule id="Q96A70-3"/>
</dbReference>
<dbReference type="ProteomicsDB" id="75927">
    <molecule id="Q96A70-4"/>
</dbReference>
<dbReference type="Antibodypedia" id="31397">
    <property type="antibodies" value="77 antibodies from 21 providers"/>
</dbReference>
<dbReference type="DNASU" id="113451"/>
<dbReference type="Ensembl" id="ENST00000294517.11">
    <molecule id="Q96A70-1"/>
    <property type="protein sequence ID" value="ENSP00000294517.6"/>
    <property type="gene ID" value="ENSG00000142920.18"/>
</dbReference>
<dbReference type="Ensembl" id="ENST00000373441.1">
    <molecule id="Q96A70-2"/>
    <property type="protein sequence ID" value="ENSP00000362540.1"/>
    <property type="gene ID" value="ENSG00000142920.18"/>
</dbReference>
<dbReference type="Ensembl" id="ENST00000373443.7">
    <molecule id="Q96A70-1"/>
    <property type="protein sequence ID" value="ENSP00000362542.3"/>
    <property type="gene ID" value="ENSG00000142920.18"/>
</dbReference>
<dbReference type="GeneID" id="113451"/>
<dbReference type="KEGG" id="hsa:113451"/>
<dbReference type="MANE-Select" id="ENST00000294517.11">
    <property type="protein sequence ID" value="ENSP00000294517.6"/>
    <property type="RefSeq nucleotide sequence ID" value="NM_052998.4"/>
    <property type="RefSeq protein sequence ID" value="NP_443724.1"/>
</dbReference>
<dbReference type="UCSC" id="uc001bwr.3">
    <molecule id="Q96A70-1"/>
    <property type="organism name" value="human"/>
</dbReference>
<dbReference type="AGR" id="HGNC:29957"/>
<dbReference type="CTD" id="113451"/>
<dbReference type="DisGeNET" id="113451"/>
<dbReference type="GeneCards" id="AZIN2"/>
<dbReference type="HGNC" id="HGNC:29957">
    <property type="gene designation" value="AZIN2"/>
</dbReference>
<dbReference type="HPA" id="ENSG00000142920">
    <property type="expression patterns" value="Group enriched (brain, testis)"/>
</dbReference>
<dbReference type="MIM" id="608353">
    <property type="type" value="gene"/>
</dbReference>
<dbReference type="neXtProt" id="NX_Q96A70"/>
<dbReference type="OpenTargets" id="ENSG00000142920"/>
<dbReference type="PharmGKB" id="PA142672642"/>
<dbReference type="VEuPathDB" id="HostDB:ENSG00000142920"/>
<dbReference type="eggNOG" id="KOG0622">
    <property type="taxonomic scope" value="Eukaryota"/>
</dbReference>
<dbReference type="GeneTree" id="ENSGT00950000182995"/>
<dbReference type="HOGENOM" id="CLU_026444_1_1_1"/>
<dbReference type="InParanoid" id="Q96A70"/>
<dbReference type="OMA" id="FTCYSVK"/>
<dbReference type="OrthoDB" id="5034579at2759"/>
<dbReference type="PAN-GO" id="Q96A70">
    <property type="GO annotations" value="6 GO annotations based on evolutionary models"/>
</dbReference>
<dbReference type="PhylomeDB" id="Q96A70"/>
<dbReference type="TreeFam" id="TF300760"/>
<dbReference type="BioCyc" id="MetaCyc:HS06971-MONOMER"/>
<dbReference type="BRENDA" id="4.1.1.19">
    <property type="organism ID" value="2681"/>
</dbReference>
<dbReference type="PathwayCommons" id="Q96A70"/>
<dbReference type="Reactome" id="R-HSA-351143">
    <property type="pathway name" value="Agmatine biosynthesis"/>
</dbReference>
<dbReference type="SignaLink" id="Q96A70"/>
<dbReference type="BioGRID-ORCS" id="113451">
    <property type="hits" value="7 hits in 1143 CRISPR screens"/>
</dbReference>
<dbReference type="GeneWiki" id="ADC_(gene)"/>
<dbReference type="GenomeRNAi" id="113451"/>
<dbReference type="Pharos" id="Q96A70">
    <property type="development level" value="Tbio"/>
</dbReference>
<dbReference type="PRO" id="PR:Q96A70"/>
<dbReference type="Proteomes" id="UP000005640">
    <property type="component" value="Chromosome 1"/>
</dbReference>
<dbReference type="RNAct" id="Q96A70">
    <property type="molecule type" value="protein"/>
</dbReference>
<dbReference type="Bgee" id="ENSG00000142920">
    <property type="expression patterns" value="Expressed in right testis and 148 other cell types or tissues"/>
</dbReference>
<dbReference type="ExpressionAtlas" id="Q96A70">
    <property type="expression patterns" value="baseline and differential"/>
</dbReference>
<dbReference type="GO" id="GO:0030424">
    <property type="term" value="C:axon"/>
    <property type="evidence" value="ECO:0000314"/>
    <property type="project" value="UniProtKB"/>
</dbReference>
<dbReference type="GO" id="GO:0005801">
    <property type="term" value="C:cis-Golgi network"/>
    <property type="evidence" value="ECO:0000250"/>
    <property type="project" value="UniProtKB"/>
</dbReference>
<dbReference type="GO" id="GO:0005737">
    <property type="term" value="C:cytoplasm"/>
    <property type="evidence" value="ECO:0000318"/>
    <property type="project" value="GO_Central"/>
</dbReference>
<dbReference type="GO" id="GO:0031410">
    <property type="term" value="C:cytoplasmic vesicle"/>
    <property type="evidence" value="ECO:0000314"/>
    <property type="project" value="UniProtKB"/>
</dbReference>
<dbReference type="GO" id="GO:0005829">
    <property type="term" value="C:cytosol"/>
    <property type="evidence" value="ECO:0000314"/>
    <property type="project" value="HPA"/>
</dbReference>
<dbReference type="GO" id="GO:0030425">
    <property type="term" value="C:dendrite"/>
    <property type="evidence" value="ECO:0000314"/>
    <property type="project" value="UniProtKB"/>
</dbReference>
<dbReference type="GO" id="GO:0033116">
    <property type="term" value="C:endoplasmic reticulum-Golgi intermediate compartment membrane"/>
    <property type="evidence" value="ECO:0000250"/>
    <property type="project" value="UniProtKB"/>
</dbReference>
<dbReference type="GO" id="GO:1990005">
    <property type="term" value="C:granular vesicle"/>
    <property type="evidence" value="ECO:0000314"/>
    <property type="project" value="UniProtKB"/>
</dbReference>
<dbReference type="GO" id="GO:0005739">
    <property type="term" value="C:mitochondrion"/>
    <property type="evidence" value="ECO:0007669"/>
    <property type="project" value="Ensembl"/>
</dbReference>
<dbReference type="GO" id="GO:0005634">
    <property type="term" value="C:nucleus"/>
    <property type="evidence" value="ECO:0000314"/>
    <property type="project" value="UniProtKB"/>
</dbReference>
<dbReference type="GO" id="GO:0043204">
    <property type="term" value="C:perikaryon"/>
    <property type="evidence" value="ECO:0000314"/>
    <property type="project" value="UniProtKB"/>
</dbReference>
<dbReference type="GO" id="GO:0048471">
    <property type="term" value="C:perinuclear region of cytoplasm"/>
    <property type="evidence" value="ECO:0000314"/>
    <property type="project" value="UniProtKB"/>
</dbReference>
<dbReference type="GO" id="GO:0005802">
    <property type="term" value="C:trans-Golgi network"/>
    <property type="evidence" value="ECO:0000314"/>
    <property type="project" value="UniProtKB"/>
</dbReference>
<dbReference type="GO" id="GO:0030133">
    <property type="term" value="C:transport vesicle"/>
    <property type="evidence" value="ECO:0000315"/>
    <property type="project" value="UniProtKB"/>
</dbReference>
<dbReference type="GO" id="GO:0008792">
    <property type="term" value="F:arginine decarboxylase activity"/>
    <property type="evidence" value="ECO:0000304"/>
    <property type="project" value="Reactome"/>
</dbReference>
<dbReference type="GO" id="GO:0042978">
    <property type="term" value="F:ornithine decarboxylase activator activity"/>
    <property type="evidence" value="ECO:0000314"/>
    <property type="project" value="UniProtKB"/>
</dbReference>
<dbReference type="GO" id="GO:0097055">
    <property type="term" value="P:agmatine biosynthetic process"/>
    <property type="evidence" value="ECO:0000304"/>
    <property type="project" value="Reactome"/>
</dbReference>
<dbReference type="GO" id="GO:0042177">
    <property type="term" value="P:negative regulation of protein catabolic process"/>
    <property type="evidence" value="ECO:0000314"/>
    <property type="project" value="UniProtKB"/>
</dbReference>
<dbReference type="GO" id="GO:0006591">
    <property type="term" value="P:ornithine metabolic process"/>
    <property type="evidence" value="ECO:0007669"/>
    <property type="project" value="Ensembl"/>
</dbReference>
<dbReference type="GO" id="GO:0043085">
    <property type="term" value="P:positive regulation of catalytic activity"/>
    <property type="evidence" value="ECO:0000250"/>
    <property type="project" value="UniProtKB"/>
</dbReference>
<dbReference type="GO" id="GO:1902269">
    <property type="term" value="P:positive regulation of polyamine transmembrane transport"/>
    <property type="evidence" value="ECO:0000250"/>
    <property type="project" value="UniProtKB"/>
</dbReference>
<dbReference type="GO" id="GO:0033387">
    <property type="term" value="P:putrescine biosynthetic process from arginine, via ornithine"/>
    <property type="evidence" value="ECO:0000318"/>
    <property type="project" value="GO_Central"/>
</dbReference>
<dbReference type="GO" id="GO:0007283">
    <property type="term" value="P:spermatogenesis"/>
    <property type="evidence" value="ECO:0000303"/>
    <property type="project" value="UniProtKB"/>
</dbReference>
<dbReference type="GO" id="GO:0098629">
    <property type="term" value="P:trans-Golgi network membrane organization"/>
    <property type="evidence" value="ECO:0000315"/>
    <property type="project" value="UniProtKB"/>
</dbReference>
<dbReference type="CDD" id="cd00622">
    <property type="entry name" value="PLPDE_III_ODC"/>
    <property type="match status" value="1"/>
</dbReference>
<dbReference type="FunFam" id="2.40.37.10:FF:000009">
    <property type="entry name" value="antizyme inhibitor 2 isoform X1"/>
    <property type="match status" value="1"/>
</dbReference>
<dbReference type="FunFam" id="3.20.20.10:FF:000006">
    <property type="entry name" value="Ornithine decarboxylase 1"/>
    <property type="match status" value="1"/>
</dbReference>
<dbReference type="Gene3D" id="3.20.20.10">
    <property type="entry name" value="Alanine racemase"/>
    <property type="match status" value="1"/>
</dbReference>
<dbReference type="Gene3D" id="2.40.37.10">
    <property type="entry name" value="Lyase, Ornithine Decarboxylase, Chain A, domain 1"/>
    <property type="match status" value="1"/>
</dbReference>
<dbReference type="InterPro" id="IPR009006">
    <property type="entry name" value="Ala_racemase/Decarboxylase_C"/>
</dbReference>
<dbReference type="InterPro" id="IPR022643">
    <property type="entry name" value="De-COase2_C"/>
</dbReference>
<dbReference type="InterPro" id="IPR022657">
    <property type="entry name" value="De-COase2_CS"/>
</dbReference>
<dbReference type="InterPro" id="IPR022644">
    <property type="entry name" value="De-COase2_N"/>
</dbReference>
<dbReference type="InterPro" id="IPR022653">
    <property type="entry name" value="De-COase2_pyr-phos_BS"/>
</dbReference>
<dbReference type="InterPro" id="IPR000183">
    <property type="entry name" value="Orn/DAP/Arg_de-COase"/>
</dbReference>
<dbReference type="InterPro" id="IPR002433">
    <property type="entry name" value="Orn_de-COase"/>
</dbReference>
<dbReference type="InterPro" id="IPR029066">
    <property type="entry name" value="PLP-binding_barrel"/>
</dbReference>
<dbReference type="PANTHER" id="PTHR11482:SF4">
    <property type="entry name" value="ANTIZYME INHIBITOR 2"/>
    <property type="match status" value="1"/>
</dbReference>
<dbReference type="PANTHER" id="PTHR11482">
    <property type="entry name" value="ARGININE/DIAMINOPIMELATE/ORNITHINE DECARBOXYLASE"/>
    <property type="match status" value="1"/>
</dbReference>
<dbReference type="Pfam" id="PF02784">
    <property type="entry name" value="Orn_Arg_deC_N"/>
    <property type="match status" value="1"/>
</dbReference>
<dbReference type="Pfam" id="PF00278">
    <property type="entry name" value="Orn_DAP_Arg_deC"/>
    <property type="match status" value="1"/>
</dbReference>
<dbReference type="PRINTS" id="PR01179">
    <property type="entry name" value="ODADCRBXLASE"/>
</dbReference>
<dbReference type="PRINTS" id="PR01182">
    <property type="entry name" value="ORNDCRBXLASE"/>
</dbReference>
<dbReference type="SUPFAM" id="SSF50621">
    <property type="entry name" value="Alanine racemase C-terminal domain-like"/>
    <property type="match status" value="1"/>
</dbReference>
<dbReference type="SUPFAM" id="SSF51419">
    <property type="entry name" value="PLP-binding barrel"/>
    <property type="match status" value="1"/>
</dbReference>
<dbReference type="PROSITE" id="PS00878">
    <property type="entry name" value="ODR_DC_2_1"/>
    <property type="match status" value="1"/>
</dbReference>
<dbReference type="PROSITE" id="PS00879">
    <property type="entry name" value="ODR_DC_2_2"/>
    <property type="match status" value="1"/>
</dbReference>
<evidence type="ECO:0000250" key="1"/>
<evidence type="ECO:0000250" key="2">
    <source>
        <dbReference type="UniProtKB" id="O35484"/>
    </source>
</evidence>
<evidence type="ECO:0000269" key="3">
    <source>
    </source>
</evidence>
<evidence type="ECO:0000269" key="4">
    <source>
    </source>
</evidence>
<evidence type="ECO:0000269" key="5">
    <source>
    </source>
</evidence>
<evidence type="ECO:0000269" key="6">
    <source>
    </source>
</evidence>
<evidence type="ECO:0000269" key="7">
    <source>
    </source>
</evidence>
<evidence type="ECO:0000269" key="8">
    <source>
    </source>
</evidence>
<evidence type="ECO:0000269" key="9">
    <source>
    </source>
</evidence>
<evidence type="ECO:0000303" key="10">
    <source>
    </source>
</evidence>
<evidence type="ECO:0000305" key="11"/>
<evidence type="ECO:0000305" key="12">
    <source>
    </source>
</evidence>
<evidence type="ECO:0000305" key="13">
    <source>
    </source>
</evidence>
<gene>
    <name type="primary">AZIN2</name>
    <name type="synonym">ADC</name>
    <name type="synonym">KIAA1945</name>
    <name type="synonym">ODCP</name>
</gene>
<proteinExistence type="evidence at protein level"/>
<feature type="chain" id="PRO_0000149944" description="Antizyme inhibitor 2">
    <location>
        <begin position="1"/>
        <end position="460"/>
    </location>
</feature>
<feature type="region of interest" description="Necessary for polyamine uptake stimulation" evidence="1">
    <location>
        <begin position="117"/>
        <end position="140"/>
    </location>
</feature>
<feature type="site" description="Not modified" evidence="2">
    <location>
        <position position="70"/>
    </location>
</feature>
<feature type="splice variant" id="VSP_003754" description="In isoform 6." evidence="10">
    <location>
        <begin position="94"/>
        <end position="251"/>
    </location>
</feature>
<feature type="splice variant" id="VSP_003755" description="In isoform 4." evidence="10">
    <original>K</original>
    <variation>KFVQQRGTACLIR</variation>
    <location>
        <position position="151"/>
    </location>
</feature>
<feature type="splice variant" id="VSP_003756" description="In isoform 2." evidence="10">
    <original>E</original>
    <variation>EAPLPPPHIATCAASEPSPPA</variation>
    <location>
        <position position="305"/>
    </location>
</feature>
<feature type="splice variant" id="VSP_003757" description="In isoform 3, isoform 4 and isoform 6." evidence="10">
    <original>KPSTEQPLYSSSLWGPAVD</original>
    <variation>SKNHSPCYMSLESIHFIAV</variation>
    <location>
        <begin position="344"/>
        <end position="362"/>
    </location>
</feature>
<feature type="splice variant" id="VSP_003758" description="In isoform 3, isoform 4 and isoform 6." evidence="10">
    <location>
        <begin position="363"/>
        <end position="460"/>
    </location>
</feature>
<feature type="sequence variant" id="VAR_050611" description="In dbSNP:rs16835244.">
    <original>A</original>
    <variation>S</variation>
    <location>
        <position position="288"/>
    </location>
</feature>
<feature type="sequence conflict" description="In Ref. 3; BAB85531." evidence="11" ref="3">
    <original>MAGYLSESDFVMVEEGFSTRDLLKELTLGASQATT</original>
    <variation>QQGSSVASTEPGSGTWKDHGWHAQGASWMGSHIHPLLVIQ</variation>
    <location>
        <begin position="1"/>
        <end position="35"/>
    </location>
</feature>
<accession>Q96A70</accession>
<accession>B2RDU5</accession>
<accession>D3DPQ9</accession>
<accession>Q5TIF4</accession>
<accession>Q5TIF5</accession>
<accession>Q5TIF6</accession>
<accession>Q8TF56</accession>
<accession>Q96L54</accession>
<accession>Q96L55</accession>
<accession>Q96L56</accession>
<accession>Q96L57</accession>
<accession>Q96MD9</accession>
<reference key="1">
    <citation type="journal article" date="2001" name="Biochem. Biophys. Res. Commun.">
        <title>Expression of a novel human ornithine decarboxylase-like protein in the central nervous system and testes.</title>
        <authorList>
            <person name="Pitkaenen L.T."/>
            <person name="Heiskala M."/>
            <person name="Andersson L.C."/>
        </authorList>
    </citation>
    <scope>NUCLEOTIDE SEQUENCE [MRNA] (ISOFORMS 1; 2; 3; 4 AND 6)</scope>
    <scope>TISSUE SPECIFICITY</scope>
</reference>
<reference key="2">
    <citation type="journal article" date="2004" name="Biochim. Biophys. Acta">
        <title>Expression of human arginine decarboxylase, the biosynthetic enzyme for agmatine.</title>
        <authorList>
            <person name="Zhu M.-Y."/>
            <person name="Iyo A."/>
            <person name="Piletz J.E."/>
            <person name="Regunathan S."/>
        </authorList>
    </citation>
    <scope>NUCLEOTIDE SEQUENCE [MRNA] (ISOFORM 1)</scope>
    <scope>FUNCTION</scope>
    <scope>TISSUE SPECIFICITY</scope>
</reference>
<reference key="3">
    <citation type="journal article" date="2001" name="DNA Res.">
        <title>Prediction of the coding sequences of unidentified human genes. XXII. The complete sequences of 50 new cDNA clones which code for large proteins.</title>
        <authorList>
            <person name="Nagase T."/>
            <person name="Kikuno R."/>
            <person name="Ohara O."/>
        </authorList>
    </citation>
    <scope>NUCLEOTIDE SEQUENCE [LARGE SCALE MRNA] (ISOFORM 1)</scope>
    <source>
        <tissue>Brain</tissue>
    </source>
</reference>
<reference key="4">
    <citation type="journal article" date="2004" name="Nat. Genet.">
        <title>Complete sequencing and characterization of 21,243 full-length human cDNAs.</title>
        <authorList>
            <person name="Ota T."/>
            <person name="Suzuki Y."/>
            <person name="Nishikawa T."/>
            <person name="Otsuki T."/>
            <person name="Sugiyama T."/>
            <person name="Irie R."/>
            <person name="Wakamatsu A."/>
            <person name="Hayashi K."/>
            <person name="Sato H."/>
            <person name="Nagai K."/>
            <person name="Kimura K."/>
            <person name="Makita H."/>
            <person name="Sekine M."/>
            <person name="Obayashi M."/>
            <person name="Nishi T."/>
            <person name="Shibahara T."/>
            <person name="Tanaka T."/>
            <person name="Ishii S."/>
            <person name="Yamamoto J."/>
            <person name="Saito K."/>
            <person name="Kawai Y."/>
            <person name="Isono Y."/>
            <person name="Nakamura Y."/>
            <person name="Nagahari K."/>
            <person name="Murakami K."/>
            <person name="Yasuda T."/>
            <person name="Iwayanagi T."/>
            <person name="Wagatsuma M."/>
            <person name="Shiratori A."/>
            <person name="Sudo H."/>
            <person name="Hosoiri T."/>
            <person name="Kaku Y."/>
            <person name="Kodaira H."/>
            <person name="Kondo H."/>
            <person name="Sugawara M."/>
            <person name="Takahashi M."/>
            <person name="Kanda K."/>
            <person name="Yokoi T."/>
            <person name="Furuya T."/>
            <person name="Kikkawa E."/>
            <person name="Omura Y."/>
            <person name="Abe K."/>
            <person name="Kamihara K."/>
            <person name="Katsuta N."/>
            <person name="Sato K."/>
            <person name="Tanikawa M."/>
            <person name="Yamazaki M."/>
            <person name="Ninomiya K."/>
            <person name="Ishibashi T."/>
            <person name="Yamashita H."/>
            <person name="Murakawa K."/>
            <person name="Fujimori K."/>
            <person name="Tanai H."/>
            <person name="Kimata M."/>
            <person name="Watanabe M."/>
            <person name="Hiraoka S."/>
            <person name="Chiba Y."/>
            <person name="Ishida S."/>
            <person name="Ono Y."/>
            <person name="Takiguchi S."/>
            <person name="Watanabe S."/>
            <person name="Yosida M."/>
            <person name="Hotuta T."/>
            <person name="Kusano J."/>
            <person name="Kanehori K."/>
            <person name="Takahashi-Fujii A."/>
            <person name="Hara H."/>
            <person name="Tanase T.-O."/>
            <person name="Nomura Y."/>
            <person name="Togiya S."/>
            <person name="Komai F."/>
            <person name="Hara R."/>
            <person name="Takeuchi K."/>
            <person name="Arita M."/>
            <person name="Imose N."/>
            <person name="Musashino K."/>
            <person name="Yuuki H."/>
            <person name="Oshima A."/>
            <person name="Sasaki N."/>
            <person name="Aotsuka S."/>
            <person name="Yoshikawa Y."/>
            <person name="Matsunawa H."/>
            <person name="Ichihara T."/>
            <person name="Shiohata N."/>
            <person name="Sano S."/>
            <person name="Moriya S."/>
            <person name="Momiyama H."/>
            <person name="Satoh N."/>
            <person name="Takami S."/>
            <person name="Terashima Y."/>
            <person name="Suzuki O."/>
            <person name="Nakagawa S."/>
            <person name="Senoh A."/>
            <person name="Mizoguchi H."/>
            <person name="Goto Y."/>
            <person name="Shimizu F."/>
            <person name="Wakebe H."/>
            <person name="Hishigaki H."/>
            <person name="Watanabe T."/>
            <person name="Sugiyama A."/>
            <person name="Takemoto M."/>
            <person name="Kawakami B."/>
            <person name="Yamazaki M."/>
            <person name="Watanabe K."/>
            <person name="Kumagai A."/>
            <person name="Itakura S."/>
            <person name="Fukuzumi Y."/>
            <person name="Fujimori Y."/>
            <person name="Komiyama M."/>
            <person name="Tashiro H."/>
            <person name="Tanigami A."/>
            <person name="Fujiwara T."/>
            <person name="Ono T."/>
            <person name="Yamada K."/>
            <person name="Fujii Y."/>
            <person name="Ozaki K."/>
            <person name="Hirao M."/>
            <person name="Ohmori Y."/>
            <person name="Kawabata A."/>
            <person name="Hikiji T."/>
            <person name="Kobatake N."/>
            <person name="Inagaki H."/>
            <person name="Ikema Y."/>
            <person name="Okamoto S."/>
            <person name="Okitani R."/>
            <person name="Kawakami T."/>
            <person name="Noguchi S."/>
            <person name="Itoh T."/>
            <person name="Shigeta K."/>
            <person name="Senba T."/>
            <person name="Matsumura K."/>
            <person name="Nakajima Y."/>
            <person name="Mizuno T."/>
            <person name="Morinaga M."/>
            <person name="Sasaki M."/>
            <person name="Togashi T."/>
            <person name="Oyama M."/>
            <person name="Hata H."/>
            <person name="Watanabe M."/>
            <person name="Komatsu T."/>
            <person name="Mizushima-Sugano J."/>
            <person name="Satoh T."/>
            <person name="Shirai Y."/>
            <person name="Takahashi Y."/>
            <person name="Nakagawa K."/>
            <person name="Okumura K."/>
            <person name="Nagase T."/>
            <person name="Nomura N."/>
            <person name="Kikuchi H."/>
            <person name="Masuho Y."/>
            <person name="Yamashita R."/>
            <person name="Nakai K."/>
            <person name="Yada T."/>
            <person name="Nakamura Y."/>
            <person name="Ohara O."/>
            <person name="Isogai T."/>
            <person name="Sugano S."/>
        </authorList>
    </citation>
    <scope>NUCLEOTIDE SEQUENCE [LARGE SCALE MRNA] (ISOFORM 1)</scope>
    <source>
        <tissue>Substantia nigra</tissue>
        <tissue>Testis</tissue>
    </source>
</reference>
<reference key="5">
    <citation type="journal article" date="2006" name="Nature">
        <title>The DNA sequence and biological annotation of human chromosome 1.</title>
        <authorList>
            <person name="Gregory S.G."/>
            <person name="Barlow K.F."/>
            <person name="McLay K.E."/>
            <person name="Kaul R."/>
            <person name="Swarbreck D."/>
            <person name="Dunham A."/>
            <person name="Scott C.E."/>
            <person name="Howe K.L."/>
            <person name="Woodfine K."/>
            <person name="Spencer C.C.A."/>
            <person name="Jones M.C."/>
            <person name="Gillson C."/>
            <person name="Searle S."/>
            <person name="Zhou Y."/>
            <person name="Kokocinski F."/>
            <person name="McDonald L."/>
            <person name="Evans R."/>
            <person name="Phillips K."/>
            <person name="Atkinson A."/>
            <person name="Cooper R."/>
            <person name="Jones C."/>
            <person name="Hall R.E."/>
            <person name="Andrews T.D."/>
            <person name="Lloyd C."/>
            <person name="Ainscough R."/>
            <person name="Almeida J.P."/>
            <person name="Ambrose K.D."/>
            <person name="Anderson F."/>
            <person name="Andrew R.W."/>
            <person name="Ashwell R.I.S."/>
            <person name="Aubin K."/>
            <person name="Babbage A.K."/>
            <person name="Bagguley C.L."/>
            <person name="Bailey J."/>
            <person name="Beasley H."/>
            <person name="Bethel G."/>
            <person name="Bird C.P."/>
            <person name="Bray-Allen S."/>
            <person name="Brown J.Y."/>
            <person name="Brown A.J."/>
            <person name="Buckley D."/>
            <person name="Burton J."/>
            <person name="Bye J."/>
            <person name="Carder C."/>
            <person name="Chapman J.C."/>
            <person name="Clark S.Y."/>
            <person name="Clarke G."/>
            <person name="Clee C."/>
            <person name="Cobley V."/>
            <person name="Collier R.E."/>
            <person name="Corby N."/>
            <person name="Coville G.J."/>
            <person name="Davies J."/>
            <person name="Deadman R."/>
            <person name="Dunn M."/>
            <person name="Earthrowl M."/>
            <person name="Ellington A.G."/>
            <person name="Errington H."/>
            <person name="Frankish A."/>
            <person name="Frankland J."/>
            <person name="French L."/>
            <person name="Garner P."/>
            <person name="Garnett J."/>
            <person name="Gay L."/>
            <person name="Ghori M.R.J."/>
            <person name="Gibson R."/>
            <person name="Gilby L.M."/>
            <person name="Gillett W."/>
            <person name="Glithero R.J."/>
            <person name="Grafham D.V."/>
            <person name="Griffiths C."/>
            <person name="Griffiths-Jones S."/>
            <person name="Grocock R."/>
            <person name="Hammond S."/>
            <person name="Harrison E.S.I."/>
            <person name="Hart E."/>
            <person name="Haugen E."/>
            <person name="Heath P.D."/>
            <person name="Holmes S."/>
            <person name="Holt K."/>
            <person name="Howden P.J."/>
            <person name="Hunt A.R."/>
            <person name="Hunt S.E."/>
            <person name="Hunter G."/>
            <person name="Isherwood J."/>
            <person name="James R."/>
            <person name="Johnson C."/>
            <person name="Johnson D."/>
            <person name="Joy A."/>
            <person name="Kay M."/>
            <person name="Kershaw J.K."/>
            <person name="Kibukawa M."/>
            <person name="Kimberley A.M."/>
            <person name="King A."/>
            <person name="Knights A.J."/>
            <person name="Lad H."/>
            <person name="Laird G."/>
            <person name="Lawlor S."/>
            <person name="Leongamornlert D.A."/>
            <person name="Lloyd D.M."/>
            <person name="Loveland J."/>
            <person name="Lovell J."/>
            <person name="Lush M.J."/>
            <person name="Lyne R."/>
            <person name="Martin S."/>
            <person name="Mashreghi-Mohammadi M."/>
            <person name="Matthews L."/>
            <person name="Matthews N.S.W."/>
            <person name="McLaren S."/>
            <person name="Milne S."/>
            <person name="Mistry S."/>
            <person name="Moore M.J.F."/>
            <person name="Nickerson T."/>
            <person name="O'Dell C.N."/>
            <person name="Oliver K."/>
            <person name="Palmeiri A."/>
            <person name="Palmer S.A."/>
            <person name="Parker A."/>
            <person name="Patel D."/>
            <person name="Pearce A.V."/>
            <person name="Peck A.I."/>
            <person name="Pelan S."/>
            <person name="Phelps K."/>
            <person name="Phillimore B.J."/>
            <person name="Plumb R."/>
            <person name="Rajan J."/>
            <person name="Raymond C."/>
            <person name="Rouse G."/>
            <person name="Saenphimmachak C."/>
            <person name="Sehra H.K."/>
            <person name="Sheridan E."/>
            <person name="Shownkeen R."/>
            <person name="Sims S."/>
            <person name="Skuce C.D."/>
            <person name="Smith M."/>
            <person name="Steward C."/>
            <person name="Subramanian S."/>
            <person name="Sycamore N."/>
            <person name="Tracey A."/>
            <person name="Tromans A."/>
            <person name="Van Helmond Z."/>
            <person name="Wall M."/>
            <person name="Wallis J.M."/>
            <person name="White S."/>
            <person name="Whitehead S.L."/>
            <person name="Wilkinson J.E."/>
            <person name="Willey D.L."/>
            <person name="Williams H."/>
            <person name="Wilming L."/>
            <person name="Wray P.W."/>
            <person name="Wu Z."/>
            <person name="Coulson A."/>
            <person name="Vaudin M."/>
            <person name="Sulston J.E."/>
            <person name="Durbin R.M."/>
            <person name="Hubbard T."/>
            <person name="Wooster R."/>
            <person name="Dunham I."/>
            <person name="Carter N.P."/>
            <person name="McVean G."/>
            <person name="Ross M.T."/>
            <person name="Harrow J."/>
            <person name="Olson M.V."/>
            <person name="Beck S."/>
            <person name="Rogers J."/>
            <person name="Bentley D.R."/>
        </authorList>
    </citation>
    <scope>NUCLEOTIDE SEQUENCE [LARGE SCALE GENOMIC DNA]</scope>
</reference>
<reference key="6">
    <citation type="submission" date="2005-09" db="EMBL/GenBank/DDBJ databases">
        <authorList>
            <person name="Mural R.J."/>
            <person name="Istrail S."/>
            <person name="Sutton G.G."/>
            <person name="Florea L."/>
            <person name="Halpern A.L."/>
            <person name="Mobarry C.M."/>
            <person name="Lippert R."/>
            <person name="Walenz B."/>
            <person name="Shatkay H."/>
            <person name="Dew I."/>
            <person name="Miller J.R."/>
            <person name="Flanigan M.J."/>
            <person name="Edwards N.J."/>
            <person name="Bolanos R."/>
            <person name="Fasulo D."/>
            <person name="Halldorsson B.V."/>
            <person name="Hannenhalli S."/>
            <person name="Turner R."/>
            <person name="Yooseph S."/>
            <person name="Lu F."/>
            <person name="Nusskern D.R."/>
            <person name="Shue B.C."/>
            <person name="Zheng X.H."/>
            <person name="Zhong F."/>
            <person name="Delcher A.L."/>
            <person name="Huson D.H."/>
            <person name="Kravitz S.A."/>
            <person name="Mouchard L."/>
            <person name="Reinert K."/>
            <person name="Remington K.A."/>
            <person name="Clark A.G."/>
            <person name="Waterman M.S."/>
            <person name="Eichler E.E."/>
            <person name="Adams M.D."/>
            <person name="Hunkapiller M.W."/>
            <person name="Myers E.W."/>
            <person name="Venter J.C."/>
        </authorList>
    </citation>
    <scope>NUCLEOTIDE SEQUENCE [LARGE SCALE GENOMIC DNA]</scope>
</reference>
<reference key="7">
    <citation type="journal article" date="2004" name="Genome Res.">
        <title>The status, quality, and expansion of the NIH full-length cDNA project: the Mammalian Gene Collection (MGC).</title>
        <authorList>
            <consortium name="The MGC Project Team"/>
        </authorList>
    </citation>
    <scope>NUCLEOTIDE SEQUENCE [LARGE SCALE MRNA] (ISOFORM 1)</scope>
    <source>
        <tissue>Brain</tissue>
    </source>
</reference>
<reference key="8">
    <citation type="journal article" date="2008" name="Biochem. J.">
        <title>Human ornithine decarboxylase paralogue (ODCp) is an antizyme inhibitor but not an arginine decarboxylase.</title>
        <authorList>
            <person name="Kanerva K."/>
            <person name="Makitie L.T."/>
            <person name="Pelander A."/>
            <person name="Heiskala M."/>
            <person name="Andersson L.C."/>
        </authorList>
    </citation>
    <scope>FUNCTION</scope>
    <scope>INTERACTION WITH OAZ1; OAZ2 AND OAZ3</scope>
    <scope>UBIQUITINATION</scope>
</reference>
<reference key="9">
    <citation type="journal article" date="2009" name="Histochem. Cell Biol.">
        <title>High expression of antizyme inhibitor 2, an activator of ornithine decarboxylase in steroidogenic cells of human gonads.</title>
        <authorList>
            <person name="Makitie L.T."/>
            <person name="Kanerva K."/>
            <person name="Sankila A."/>
            <person name="Andersson L.C."/>
        </authorList>
    </citation>
    <scope>SUBCELLULAR LOCATION</scope>
    <scope>TISSUE SPECIFICITY</scope>
</reference>
<reference key="10">
    <citation type="journal article" date="2009" name="PLoS ONE">
        <title>Expression of antizyme inhibitor 2 in mast cells and role of polyamines as selective regulators of serotonin secretion.</title>
        <authorList>
            <person name="Kanerva K."/>
            <person name="Lappalainen J."/>
            <person name="Makitie L.T."/>
            <person name="Virolainen S."/>
            <person name="Kovanen P.T."/>
            <person name="Andersson L.C."/>
        </authorList>
    </citation>
    <scope>SUBCELLULAR LOCATION</scope>
    <scope>INDUCTION</scope>
    <scope>TISSUE SPECIFICITY</scope>
</reference>
<reference key="11">
    <citation type="journal article" date="2010" name="Amino Acids">
        <title>Antizyme inhibitor 2: molecular, cellular and physiological aspects.</title>
        <authorList>
            <person name="Lopez-Contreras A.J."/>
            <person name="Ramos-Molina B."/>
            <person name="Cremades A."/>
            <person name="Penafiel R."/>
        </authorList>
    </citation>
    <scope>REVIEW</scope>
    <scope>CHARACTERIZATION</scope>
</reference>
<reference key="12">
    <citation type="journal article" date="2010" name="Brain Pathol.">
        <title>Brain neurons express ornithine decarboxylase-activating antizyme inhibitor 2 with accumulation in Alzheimer's disease.</title>
        <authorList>
            <person name="Makitie L.T."/>
            <person name="Kanerva K."/>
            <person name="Polvikoski T."/>
            <person name="Paetau A."/>
            <person name="Andersson L.C."/>
        </authorList>
    </citation>
    <scope>ALTERNATIVE SPLICING</scope>
    <scope>SUBCELLULAR LOCATION</scope>
    <scope>TISSUE SPECIFICITY</scope>
</reference>
<reference key="13">
    <citation type="journal article" date="2010" name="Exp. Cell Res.">
        <title>Ornithine decarboxylase antizyme inhibitor 2 regulates intracellular vesicle trafficking.</title>
        <authorList>
            <person name="Kanerva K."/>
            <person name="Makitie L.T."/>
            <person name="Back N."/>
            <person name="Andersson L.C."/>
        </authorList>
    </citation>
    <scope>FUNCTION</scope>
    <scope>SUBCELLULAR LOCATION</scope>
</reference>
<sequence length="460" mass="49980">MAGYLSESDFVMVEEGFSTRDLLKELTLGASQATTDEVAAFFVADLGAIVRKHFCFLKCLPRVRPFYAVKCNSSPGVLKVLAQLGLGFSCANKAEMELVQHIGIPASKIICANPCKQIAQIKYAAKHGIQLLSFDNEMELAKVVKSHPSAKMVLCIATDDSHSLSCLSLKFGVSLKSCRHLLENAKKHHVEVVGVSFHIGSGCPDPQAYAQSIADARLVFEMGTELGHKMHVLDLGGGFPGTEGAKVRFEEIASVINSALDLYFPEGCGVDIFAELGRYYVTSAFTVAVSIIAKKEVLLDQPGREEENGSTSKTIVYHLDEGVYGIFNSVLFDNICPTPILQKKPSTEQPLYSSSLWGPAVDGCDCVAEGLWLPQLHVGDWLVFDNMGAYTVGMGSPFWGTQACHITYAMSRVAWEALRRQLMAAEQEDDVEGVCKPLSCGWEITDTLCVGPVFTPASIM</sequence>
<organism>
    <name type="scientific">Homo sapiens</name>
    <name type="common">Human</name>
    <dbReference type="NCBI Taxonomy" id="9606"/>
    <lineage>
        <taxon>Eukaryota</taxon>
        <taxon>Metazoa</taxon>
        <taxon>Chordata</taxon>
        <taxon>Craniata</taxon>
        <taxon>Vertebrata</taxon>
        <taxon>Euteleostomi</taxon>
        <taxon>Mammalia</taxon>
        <taxon>Eutheria</taxon>
        <taxon>Euarchontoglires</taxon>
        <taxon>Primates</taxon>
        <taxon>Haplorrhini</taxon>
        <taxon>Catarrhini</taxon>
        <taxon>Hominidae</taxon>
        <taxon>Homo</taxon>
    </lineage>
</organism>
<keyword id="KW-0025">Alternative splicing</keyword>
<keyword id="KW-0966">Cell projection</keyword>
<keyword id="KW-0963">Cytoplasm</keyword>
<keyword id="KW-0968">Cytoplasmic vesicle</keyword>
<keyword id="KW-0333">Golgi apparatus</keyword>
<keyword id="KW-0472">Membrane</keyword>
<keyword id="KW-0539">Nucleus</keyword>
<keyword id="KW-0620">Polyamine biosynthesis</keyword>
<keyword id="KW-1267">Proteomics identification</keyword>
<keyword id="KW-0663">Pyridoxal phosphate</keyword>
<keyword id="KW-1185">Reference proteome</keyword>
<keyword id="KW-0813">Transport</keyword>
<keyword id="KW-0832">Ubl conjugation</keyword>
<protein>
    <recommendedName>
        <fullName>Antizyme inhibitor 2</fullName>
        <shortName>AzI2</shortName>
    </recommendedName>
    <alternativeName>
        <fullName>Arginine decarboxylase</fullName>
        <shortName>ADC</shortName>
        <shortName>ARGDC</shortName>
    </alternativeName>
    <alternativeName>
        <fullName>Ornithine decarboxylase-like protein</fullName>
        <shortName>ODC-like protein</shortName>
    </alternativeName>
    <alternativeName>
        <fullName>ornithine decarboxylase paralog</fullName>
        <shortName>ODC-p</shortName>
    </alternativeName>
</protein>
<name>AZIN2_HUMAN</name>
<comment type="function">
    <text evidence="5 9">Antizyme inhibitor (AZI) protein that positively regulates ornithine decarboxylase (ODC) activity and polyamine uptake. AZI is an enzymatically inactive ODC homolog that counteracts the negative effect of ODC antizymes (AZs) OAZ1, OAZ2 and OAZ3 on ODC activity by competing with ODC for antizyme-binding (PubMed:17900240). Inhibits antizyme-dependent ODC degradation and releases ODC monomers from their inactive complex with antizymes, leading to formation of the catalytically active ODC homodimer and restoring polyamine production (PubMed:17900240). Participates in the morphological integrity of the trans-Golgi network (TGN) and functions as a regulator of intracellular secretory vesicle trafficking (PubMed:20188728).</text>
</comment>
<comment type="subunit">
    <text evidence="5">Monomer. Interacts with OAZ1, OAZ2 and OAZ3; this interaction disrupts the interaction between the antizyme and ODC1. Does not form a heterodimer with ODC1.</text>
</comment>
<comment type="interaction">
    <interactant intactId="EBI-10281609">
        <id>Q96A70</id>
    </interactant>
    <interactant intactId="EBI-10281601">
        <id>Q9UMX2</id>
        <label>OAZ3</label>
    </interactant>
    <organismsDiffer>false</organismsDiffer>
    <experiments>5</experiments>
</comment>
<comment type="interaction">
    <interactant intactId="EBI-10281609">
        <id>Q96A70</id>
    </interactant>
    <interactant intactId="EBI-12049527">
        <id>Q9UMX2-2</id>
        <label>OAZ3</label>
    </interactant>
    <organismsDiffer>false</organismsDiffer>
    <experiments>3</experiments>
</comment>
<comment type="subcellular location">
    <subcellularLocation>
        <location>Nucleus</location>
    </subcellularLocation>
    <subcellularLocation>
        <location evidence="1">Cytoplasm</location>
    </subcellularLocation>
    <subcellularLocation>
        <location>Cytoplasm</location>
        <location>Perinuclear region</location>
    </subcellularLocation>
    <subcellularLocation>
        <location evidence="1">Membrane</location>
    </subcellularLocation>
    <subcellularLocation>
        <location>Cytoplasmic vesicle</location>
    </subcellularLocation>
    <subcellularLocation>
        <location evidence="1">Endoplasmic reticulum-Golgi intermediate compartment</location>
    </subcellularLocation>
    <subcellularLocation>
        <location evidence="1">Golgi apparatus</location>
        <location evidence="1">cis-Golgi network</location>
    </subcellularLocation>
    <subcellularLocation>
        <location>Golgi apparatus</location>
        <location>trans-Golgi network</location>
    </subcellularLocation>
    <subcellularLocation>
        <location>Cytoplasmic granule</location>
    </subcellularLocation>
    <subcellularLocation>
        <location>Cell projection</location>
        <location>Axon</location>
    </subcellularLocation>
    <subcellularLocation>
        <location>Cell projection</location>
        <location>Dendrite</location>
    </subcellularLocation>
    <subcellularLocation>
        <location>Perikaryon</location>
    </subcellularLocation>
    <text evidence="1">Colocalizes with KDEL receptors in ER-Golgi intermediate compartment (ERGIC). Translocates from the ERGIC structure to the cytoplasm in an antizyme-dependent manner. Localizes with vesicle-associated membrane protein VAMP8 in the vicinity of the plasma membrane within serotonin-containing secretory granules (By similarity). Detected as vesicle-like pattern in neurite outgrowths. Localizes to the vesicular compartments of the secretory pathway, predominantly in the trans-Golgi network (TGN). Localizes with vesicle-associated membrane protein VAMP8 in the vicinity of the plasma membrane within serotonin-containing secretory granules.</text>
</comment>
<comment type="alternative products">
    <event type="alternative splicing"/>
    <isoform>
        <id>Q96A70-1</id>
        <name>1</name>
        <sequence type="displayed"/>
    </isoform>
    <isoform>
        <id>Q96A70-2</id>
        <name>2</name>
        <sequence type="described" ref="VSP_003756"/>
    </isoform>
    <isoform>
        <id>Q96A70-3</id>
        <name>3</name>
        <sequence type="described" ref="VSP_003757 VSP_003758"/>
    </isoform>
    <isoform>
        <id>Q96A70-4</id>
        <name>4</name>
        <sequence type="described" ref="VSP_003755 VSP_003757 VSP_003758"/>
    </isoform>
    <isoform>
        <id>Q96A70-5</id>
        <name>6</name>
        <sequence type="described" ref="VSP_003754 VSP_003757 VSP_003758"/>
    </isoform>
    <text>Additional isoforms seem to exist.</text>
</comment>
<comment type="tissue specificity">
    <text evidence="3 4 6 7 8">Expressed in the neocortex, thalamus, hippocampus, cerebellum, medulla oblongata, gray and white matter. Expressed in neurons, oligodendrocytes, basket, Purkinje and pyramidal cells. Expressed in spermatocytes and Leydig cells of the testis. Expressed in luteal theca cells lining corpus luteum cysts and in hilus cells of the ovary. Expressed in primary and neoplastic mast cells (MC) (at protein level). Highly expressed in brain. Also expressed in testis.</text>
</comment>
<comment type="domain">
    <text evidence="1">The N-terminus domain is necessary for its localization to the ER-Golgi intermediate compartment (ERGIC).</text>
</comment>
<comment type="PTM">
    <text evidence="5">Ubiquitinated, leading to its proteasomal degradation; a process that is reduced in presence of antizymes. May also be degraded through the lysosomal degradative pathway in a proteasomal-independent manner.</text>
</comment>
<comment type="similarity">
    <text evidence="11">Belongs to the Orn/Lys/Arg decarboxylase class-II family. ODC antizyme inhibitor subfamily.</text>
</comment>
<comment type="caution">
    <text evidence="12 13">Was initially reported to have ornithine decarboxylase (PubMed:11587527) or arginine decarboxylase (PubMed:14738999) activities, but it was later found that the mouse ortholog does not possess either of them.</text>
</comment>